<reference key="1">
    <citation type="journal article" date="2004" name="Proc. Natl. Acad. Sci. U.S.A.">
        <title>Insights into the evolution of Yersinia pestis through whole-genome comparison with Yersinia pseudotuberculosis.</title>
        <authorList>
            <person name="Chain P.S.G."/>
            <person name="Carniel E."/>
            <person name="Larimer F.W."/>
            <person name="Lamerdin J."/>
            <person name="Stoutland P.O."/>
            <person name="Regala W.M."/>
            <person name="Georgescu A.M."/>
            <person name="Vergez L.M."/>
            <person name="Land M.L."/>
            <person name="Motin V.L."/>
            <person name="Brubaker R.R."/>
            <person name="Fowler J."/>
            <person name="Hinnebusch J."/>
            <person name="Marceau M."/>
            <person name="Medigue C."/>
            <person name="Simonet M."/>
            <person name="Chenal-Francisque V."/>
            <person name="Souza B."/>
            <person name="Dacheux D."/>
            <person name="Elliott J.M."/>
            <person name="Derbise A."/>
            <person name="Hauser L.J."/>
            <person name="Garcia E."/>
        </authorList>
    </citation>
    <scope>NUCLEOTIDE SEQUENCE [LARGE SCALE GENOMIC DNA]</scope>
    <source>
        <strain>IP32953</strain>
    </source>
</reference>
<accession>Q667S5</accession>
<gene>
    <name evidence="1" type="primary">kdpA</name>
    <name type="ordered locus">YPTB2916</name>
</gene>
<dbReference type="EMBL" id="BX936398">
    <property type="protein sequence ID" value="CAH22154.1"/>
    <property type="molecule type" value="Genomic_DNA"/>
</dbReference>
<dbReference type="RefSeq" id="WP_011192832.1">
    <property type="nucleotide sequence ID" value="NC_006155.1"/>
</dbReference>
<dbReference type="SMR" id="Q667S5"/>
<dbReference type="GeneID" id="49785072"/>
<dbReference type="KEGG" id="ypo:BZ17_3712"/>
<dbReference type="KEGG" id="yps:YPTB2916"/>
<dbReference type="PATRIC" id="fig|273123.14.peg.3893"/>
<dbReference type="Proteomes" id="UP000001011">
    <property type="component" value="Chromosome"/>
</dbReference>
<dbReference type="GO" id="GO:0005886">
    <property type="term" value="C:plasma membrane"/>
    <property type="evidence" value="ECO:0007669"/>
    <property type="project" value="UniProtKB-SubCell"/>
</dbReference>
<dbReference type="GO" id="GO:0008556">
    <property type="term" value="F:P-type potassium transmembrane transporter activity"/>
    <property type="evidence" value="ECO:0007669"/>
    <property type="project" value="InterPro"/>
</dbReference>
<dbReference type="GO" id="GO:0030955">
    <property type="term" value="F:potassium ion binding"/>
    <property type="evidence" value="ECO:0007669"/>
    <property type="project" value="UniProtKB-UniRule"/>
</dbReference>
<dbReference type="HAMAP" id="MF_00275">
    <property type="entry name" value="KdpA"/>
    <property type="match status" value="1"/>
</dbReference>
<dbReference type="InterPro" id="IPR004623">
    <property type="entry name" value="KdpA"/>
</dbReference>
<dbReference type="NCBIfam" id="TIGR00680">
    <property type="entry name" value="kdpA"/>
    <property type="match status" value="1"/>
</dbReference>
<dbReference type="PANTHER" id="PTHR30607">
    <property type="entry name" value="POTASSIUM-TRANSPORTING ATPASE A CHAIN"/>
    <property type="match status" value="1"/>
</dbReference>
<dbReference type="PANTHER" id="PTHR30607:SF2">
    <property type="entry name" value="POTASSIUM-TRANSPORTING ATPASE POTASSIUM-BINDING SUBUNIT"/>
    <property type="match status" value="1"/>
</dbReference>
<dbReference type="Pfam" id="PF03814">
    <property type="entry name" value="KdpA"/>
    <property type="match status" value="1"/>
</dbReference>
<dbReference type="PIRSF" id="PIRSF001294">
    <property type="entry name" value="K_ATPaseA"/>
    <property type="match status" value="1"/>
</dbReference>
<organism>
    <name type="scientific">Yersinia pseudotuberculosis serotype I (strain IP32953)</name>
    <dbReference type="NCBI Taxonomy" id="273123"/>
    <lineage>
        <taxon>Bacteria</taxon>
        <taxon>Pseudomonadati</taxon>
        <taxon>Pseudomonadota</taxon>
        <taxon>Gammaproteobacteria</taxon>
        <taxon>Enterobacterales</taxon>
        <taxon>Yersiniaceae</taxon>
        <taxon>Yersinia</taxon>
    </lineage>
</organism>
<comment type="function">
    <text evidence="1">Part of the high-affinity ATP-driven potassium transport (or Kdp) system, which catalyzes the hydrolysis of ATP coupled with the electrogenic transport of potassium into the cytoplasm. This subunit binds the periplasmic potassium ions and delivers the ions to the membrane domain of KdpB through an intramembrane tunnel.</text>
</comment>
<comment type="subunit">
    <text evidence="1">The system is composed of three essential subunits: KdpA, KdpB and KdpC.</text>
</comment>
<comment type="subcellular location">
    <subcellularLocation>
        <location evidence="1">Cell inner membrane</location>
        <topology evidence="1">Multi-pass membrane protein</topology>
    </subcellularLocation>
</comment>
<comment type="similarity">
    <text evidence="1">Belongs to the KdpA family.</text>
</comment>
<sequence length="562" mass="59175">MVASGFLLIASFMLVLFVLSRPLGGFLARLIEGEPFSALQKVEAGLWRCSGVKNAEMNGWQYALAILCFNLLGIVLLFVLLMTQGSLPLNPEHLPGMSWHLALNTAVSFVTNTNWQAYSGENTLSYLSQMAGLTVQNFLSAATGIAVAFALIRAFARHSATTLGNAWVDLVRITLYVLLPIALIIALIFVSQGVLQNLDGYLHITTLEGVQQTLPMGPVASQEAIKVLGTNGGGFFGANSAHPFENPTAFSNFVQMLAIFLIPCALCFAFGQVVGDNRQGHALIWAMSLIFIVAVVVVMYAELAGNPHLSPLGADSNSNMEGKESRFGILATSLYAVVTTAASCGAVNAMHDSFTALGGMIPLWLMQIGEVVFGGVGSGLYGMLLFVLLTVFIAGLMIGRTPEYLGKKIDVFDMKMTALAILVTPTIVLLGTALALCTEAGRAGILNPGAHGFSEVLYALSSAANNNGSAFAGLSVNTPFYNLLLAAAMFIGRFGVILPVLAIASSLVAKKRQPAGNGTLPTGGPLFIGLLIGTVLLVGALTFIPALALGPVAEHLQVWLAH</sequence>
<name>KDPA_YERPS</name>
<proteinExistence type="inferred from homology"/>
<keyword id="KW-0997">Cell inner membrane</keyword>
<keyword id="KW-1003">Cell membrane</keyword>
<keyword id="KW-0406">Ion transport</keyword>
<keyword id="KW-0472">Membrane</keyword>
<keyword id="KW-0630">Potassium</keyword>
<keyword id="KW-0633">Potassium transport</keyword>
<keyword id="KW-0812">Transmembrane</keyword>
<keyword id="KW-1133">Transmembrane helix</keyword>
<keyword id="KW-0813">Transport</keyword>
<feature type="chain" id="PRO_0000166540" description="Potassium-transporting ATPase potassium-binding subunit">
    <location>
        <begin position="1"/>
        <end position="562"/>
    </location>
</feature>
<feature type="transmembrane region" description="Helical" evidence="1">
    <location>
        <begin position="6"/>
        <end position="26"/>
    </location>
</feature>
<feature type="transmembrane region" description="Helical" evidence="1">
    <location>
        <begin position="62"/>
        <end position="82"/>
    </location>
</feature>
<feature type="transmembrane region" description="Helical" evidence="1">
    <location>
        <begin position="132"/>
        <end position="152"/>
    </location>
</feature>
<feature type="transmembrane region" description="Helical" evidence="1">
    <location>
        <begin position="175"/>
        <end position="195"/>
    </location>
</feature>
<feature type="transmembrane region" description="Helical" evidence="1">
    <location>
        <begin position="253"/>
        <end position="273"/>
    </location>
</feature>
<feature type="transmembrane region" description="Helical" evidence="1">
    <location>
        <begin position="283"/>
        <end position="303"/>
    </location>
</feature>
<feature type="transmembrane region" description="Helical" evidence="1">
    <location>
        <begin position="327"/>
        <end position="347"/>
    </location>
</feature>
<feature type="transmembrane region" description="Helical" evidence="1">
    <location>
        <begin position="356"/>
        <end position="376"/>
    </location>
</feature>
<feature type="transmembrane region" description="Helical" evidence="1">
    <location>
        <begin position="379"/>
        <end position="399"/>
    </location>
</feature>
<feature type="transmembrane region" description="Helical" evidence="1">
    <location>
        <begin position="416"/>
        <end position="436"/>
    </location>
</feature>
<feature type="transmembrane region" description="Helical" evidence="1">
    <location>
        <begin position="483"/>
        <end position="503"/>
    </location>
</feature>
<feature type="transmembrane region" description="Helical" evidence="1">
    <location>
        <begin position="526"/>
        <end position="546"/>
    </location>
</feature>
<evidence type="ECO:0000255" key="1">
    <source>
        <dbReference type="HAMAP-Rule" id="MF_00275"/>
    </source>
</evidence>
<protein>
    <recommendedName>
        <fullName evidence="1">Potassium-transporting ATPase potassium-binding subunit</fullName>
    </recommendedName>
    <alternativeName>
        <fullName evidence="1">ATP phosphohydrolase [potassium-transporting] A chain</fullName>
    </alternativeName>
    <alternativeName>
        <fullName evidence="1">Potassium-binding and translocating subunit A</fullName>
    </alternativeName>
    <alternativeName>
        <fullName evidence="1">Potassium-translocating ATPase A chain</fullName>
    </alternativeName>
</protein>